<feature type="initiator methionine" description="Removed; by host" evidence="1">
    <location>
        <position position="1"/>
    </location>
</feature>
<feature type="chain" id="PRO_0000306025" description="Gag-Pol polyprotein">
    <location>
        <begin position="2"/>
        <end position="1441"/>
    </location>
</feature>
<feature type="chain" id="PRO_0000306026" description="Matrix protein p17" evidence="1">
    <location>
        <begin position="2"/>
        <end position="121"/>
    </location>
</feature>
<feature type="chain" id="PRO_0000306027" description="Capsid protein p24" evidence="1">
    <location>
        <begin position="122"/>
        <end position="353"/>
    </location>
</feature>
<feature type="chain" id="PRO_0000306028" description="Nucleocapsid protein p7" evidence="1">
    <location>
        <begin position="354"/>
        <end position="432"/>
    </location>
</feature>
<feature type="chain" id="PRO_0000306029" description="p6-pol" evidence="8">
    <location>
        <begin position="433"/>
        <end position="493"/>
    </location>
</feature>
<feature type="chain" id="PRO_0000306030" description="Protease" evidence="1">
    <location>
        <begin position="494"/>
        <end position="594"/>
    </location>
</feature>
<feature type="chain" id="PRO_0000306031" description="Reverse transcriptase/ribonuclease H" evidence="1">
    <location>
        <begin position="595"/>
        <end position="1156"/>
    </location>
</feature>
<feature type="chain" id="PRO_0000306032" description="p51 RT" evidence="1">
    <location>
        <begin position="595"/>
        <end position="1036"/>
    </location>
</feature>
<feature type="chain" id="PRO_0000306033" description="p15" evidence="1">
    <location>
        <begin position="1037"/>
        <end position="1156"/>
    </location>
</feature>
<feature type="chain" id="PRO_0000306034" description="Integrase" evidence="1">
    <location>
        <begin position="1157"/>
        <end position="1441"/>
    </location>
</feature>
<feature type="domain" description="Peptidase A2" evidence="10">
    <location>
        <begin position="513"/>
        <end position="584"/>
    </location>
</feature>
<feature type="domain" description="Reverse transcriptase" evidence="11">
    <location>
        <begin position="640"/>
        <end position="830"/>
    </location>
</feature>
<feature type="domain" description="RNase H type-1" evidence="12">
    <location>
        <begin position="1030"/>
        <end position="1153"/>
    </location>
</feature>
<feature type="domain" description="Integrase catalytic" evidence="14">
    <location>
        <begin position="1210"/>
        <end position="1360"/>
    </location>
</feature>
<feature type="zinc finger region" description="CCHC-type 1" evidence="9">
    <location>
        <begin position="386"/>
        <end position="403"/>
    </location>
</feature>
<feature type="zinc finger region" description="CCHC-type 2" evidence="9">
    <location>
        <begin position="407"/>
        <end position="424"/>
    </location>
</feature>
<feature type="zinc finger region" description="Integrase-type" evidence="13">
    <location>
        <begin position="1159"/>
        <end position="1200"/>
    </location>
</feature>
<feature type="DNA-binding region" description="Integrase-type" evidence="15">
    <location>
        <begin position="1379"/>
        <end position="1426"/>
    </location>
</feature>
<feature type="region of interest" description="Disordered" evidence="17">
    <location>
        <begin position="204"/>
        <end position="226"/>
    </location>
</feature>
<feature type="region of interest" description="Disordered" evidence="17">
    <location>
        <begin position="444"/>
        <end position="494"/>
    </location>
</feature>
<feature type="region of interest" description="RT 'primer grip'" evidence="1">
    <location>
        <begin position="823"/>
        <end position="831"/>
    </location>
</feature>
<feature type="short sequence motif" description="Nuclear export signal" evidence="1">
    <location>
        <begin position="16"/>
        <end position="22"/>
    </location>
</feature>
<feature type="short sequence motif" description="Nuclear localization signal" evidence="1">
    <location>
        <begin position="26"/>
        <end position="32"/>
    </location>
</feature>
<feature type="short sequence motif" description="Tryptophan repeat motif" evidence="1">
    <location>
        <begin position="994"/>
        <end position="1010"/>
    </location>
</feature>
<feature type="compositionally biased region" description="Polar residues" evidence="17">
    <location>
        <begin position="444"/>
        <end position="466"/>
    </location>
</feature>
<feature type="compositionally biased region" description="Basic and acidic residues" evidence="17">
    <location>
        <begin position="467"/>
        <end position="480"/>
    </location>
</feature>
<feature type="active site" description="For protease activity; shared with dimeric partner" evidence="16">
    <location>
        <position position="518"/>
    </location>
</feature>
<feature type="binding site" evidence="1">
    <location>
        <position position="706"/>
    </location>
    <ligand>
        <name>Mg(2+)</name>
        <dbReference type="ChEBI" id="CHEBI:18420"/>
        <label>1</label>
        <note>catalytic; for reverse transcriptase activity</note>
    </ligand>
</feature>
<feature type="binding site" evidence="1">
    <location>
        <position position="781"/>
    </location>
    <ligand>
        <name>Mg(2+)</name>
        <dbReference type="ChEBI" id="CHEBI:18420"/>
        <label>1</label>
        <note>catalytic; for reverse transcriptase activity</note>
    </ligand>
</feature>
<feature type="binding site" evidence="1">
    <location>
        <position position="782"/>
    </location>
    <ligand>
        <name>Mg(2+)</name>
        <dbReference type="ChEBI" id="CHEBI:18420"/>
        <label>1</label>
        <note>catalytic; for reverse transcriptase activity</note>
    </ligand>
</feature>
<feature type="binding site" evidence="1">
    <location>
        <position position="1039"/>
    </location>
    <ligand>
        <name>Mg(2+)</name>
        <dbReference type="ChEBI" id="CHEBI:18420"/>
        <label>2</label>
        <note>catalytic; for RNase H activity</note>
    </ligand>
</feature>
<feature type="binding site" evidence="1">
    <location>
        <position position="1074"/>
    </location>
    <ligand>
        <name>Mg(2+)</name>
        <dbReference type="ChEBI" id="CHEBI:18420"/>
        <label>2</label>
        <note>catalytic; for RNase H activity</note>
    </ligand>
</feature>
<feature type="binding site" evidence="1">
    <location>
        <position position="1094"/>
    </location>
    <ligand>
        <name>Mg(2+)</name>
        <dbReference type="ChEBI" id="CHEBI:18420"/>
        <label>2</label>
        <note>catalytic; for RNase H activity</note>
    </ligand>
</feature>
<feature type="binding site" evidence="1">
    <location>
        <position position="1145"/>
    </location>
    <ligand>
        <name>Mg(2+)</name>
        <dbReference type="ChEBI" id="CHEBI:18420"/>
        <label>2</label>
        <note>catalytic; for RNase H activity</note>
    </ligand>
</feature>
<feature type="binding site" evidence="13">
    <location>
        <position position="1168"/>
    </location>
    <ligand>
        <name>Zn(2+)</name>
        <dbReference type="ChEBI" id="CHEBI:29105"/>
    </ligand>
</feature>
<feature type="binding site" evidence="13">
    <location>
        <position position="1172"/>
    </location>
    <ligand>
        <name>Zn(2+)</name>
        <dbReference type="ChEBI" id="CHEBI:29105"/>
    </ligand>
</feature>
<feature type="binding site" evidence="13">
    <location>
        <position position="1196"/>
    </location>
    <ligand>
        <name>Zn(2+)</name>
        <dbReference type="ChEBI" id="CHEBI:29105"/>
    </ligand>
</feature>
<feature type="binding site" evidence="13">
    <location>
        <position position="1199"/>
    </location>
    <ligand>
        <name>Zn(2+)</name>
        <dbReference type="ChEBI" id="CHEBI:29105"/>
    </ligand>
</feature>
<feature type="binding site" evidence="1">
    <location>
        <position position="1220"/>
    </location>
    <ligand>
        <name>Mg(2+)</name>
        <dbReference type="ChEBI" id="CHEBI:18420"/>
        <label>3</label>
        <note>catalytic; for integrase activity</note>
    </ligand>
</feature>
<feature type="binding site" evidence="1">
    <location>
        <position position="1272"/>
    </location>
    <ligand>
        <name>Mg(2+)</name>
        <dbReference type="ChEBI" id="CHEBI:18420"/>
        <label>3</label>
        <note>catalytic; for integrase activity</note>
    </ligand>
</feature>
<feature type="site" description="Cleavage; by viral protease" evidence="1">
    <location>
        <begin position="121"/>
        <end position="122"/>
    </location>
</feature>
<feature type="site" description="Cleavage; by viral protease" evidence="1">
    <location>
        <begin position="353"/>
        <end position="354"/>
    </location>
</feature>
<feature type="site" description="Cleavage; by viral protease" evidence="1">
    <location>
        <begin position="432"/>
        <end position="433"/>
    </location>
</feature>
<feature type="site" description="Cleavage; by viral protease" evidence="1">
    <location>
        <begin position="493"/>
        <end position="494"/>
    </location>
</feature>
<feature type="site" description="Cleavage; by viral protease" evidence="8">
    <location>
        <begin position="594"/>
        <end position="595"/>
    </location>
</feature>
<feature type="site" description="Essential for RT p66/p51 heterodimerization" evidence="1">
    <location>
        <position position="997"/>
    </location>
</feature>
<feature type="site" description="Cleavage; by viral protease" evidence="1">
    <location>
        <begin position="1036"/>
        <end position="1037"/>
    </location>
</feature>
<feature type="site" description="Cleavage; by viral protease" evidence="1">
    <location>
        <begin position="1156"/>
        <end position="1157"/>
    </location>
</feature>
<feature type="lipid moiety-binding region" description="N-myristoyl glycine; by host" evidence="1">
    <location>
        <position position="2"/>
    </location>
</feature>
<accession>P22382</accession>
<comment type="function">
    <text evidence="1">Gag-Pol polyprotein and Gag polyprotein may regulate their own translation, by the binding genomic RNA in the 5'-UTR. At low concentration, Gag-Pol and Gag would promote translation, whereas at high concentration, the polyproteins encapsidate genomic RNA and then shut off translation (By similarity).</text>
</comment>
<comment type="function">
    <text evidence="1">Matrix protein p17 has two main functions: in infected cell, it targets Gag and Gag-pol polyproteins to the plasma membrane via a multipartite membrane-binding signal, that includes its myristointegration complex. The myristoylation signal and the NLS exert conflicting influences its subcellular localization. The key regulation of these motifs might be phosphorylation of a portion of MA molecules on the C-terminal tyrosine at the time of virus maturation, by virion-associated cellular tyrosine kinase. Implicated in the release from host cell mediated by Vpu (By similarity).</text>
</comment>
<comment type="function">
    <text evidence="1">Capsid protein p24 forms the conical core that encapsulates the genomic RNA-nucleocapsid complex in the virion. The core is constituted by capsid protein hexamer subunits. The core is disassembled soon after virion entry. Interaction with host PPIA/CYPA protects the virus from restriction by host TRIM5-alpha and from an unknown antiviral activity in host cells. This capsid restriction by TRIM5 is one of the factors which restricts SIV to the simian species (By similarity).</text>
</comment>
<comment type="function">
    <text evidence="1">Nucleocapsid protein p7 encapsulates and protects viral dimeric unspliced (genomic) RNA. Binds these RNAs through its zinc fingers. Facilitates rearangement of nucleic acid secondary structure during retrotranscription of genomic RNA. This capability is referred to as nucleic acid chaperone activity (By similarity).</text>
</comment>
<comment type="function">
    <text evidence="10">The aspartyl protease mediates proteolytic cleavages of Gag and Gag-Pol polyproteins during or shortly after the release of the virion from the plasma membrane. Cleavages take place as an ordered, step-wise cascade to yield mature proteins. This process is called maturation. Displays maximal activity during the budding process just prior to particle release from the cell. Also cleaves Nef and Vif, probably concomitantly with viral structural proteins on maturation of virus particles. Hydrolyzes host EIF4GI and PABP1 in order to shut off the capped cellular mRNA translation. The resulting inhibition of cellular protein synthesis serves to ensure maximal viral gene expression and to evade host immune response (By similarity).</text>
</comment>
<comment type="function">
    <text evidence="1">Reverse transcriptase/ribonuclease H (RT) is a multifunctional enzyme that converts the viral dimeric RNA genome into dsDNA in the cytoplasm, shortly after virus entry into the cell. This enzyme displays a DNA polymerase activity that can copy either DNA or RNA templates, and a ribonuclease H (RNase H) activity that cleaves the RNA strand of RNA-DNA heteroduplexes in a partially processive 3' to 5' endonucleasic mode. Conversion of viral genomic RNA into dsDNA requires many steps. A tRNA binds to the primer-binding site (PBS) situated at the 5'-end of the viral RNA. RT uses the 3' end of the tRNA primer to perform a short round of RNA-dependent minus-strand DNA synthesis. The reading proceeds through the U5 region and ends after the repeated (R) region which is present at both ends of viral RNA. The portion of the RNA-DNA heteroduplex is digested by the RNase H, resulting in a ssDNA product attached to the tRNA primer. This ssDNA/tRNA hybridizes with the identical R region situated at the 3' end of viral RNA. This template exchange, known as minus-strand DNA strong stop transfer, can be either intra- or intermolecular. RT uses the 3' end of this newly synthesized short ssDNA to perform the RNA-dependent minus-strand DNA synthesis of the whole template. RNase H digests the RNA template except for two polypurine tracts (PPTs) situated at the 5'-end and near the center of the genome. It is not clear if both polymerase and RNase H activities are simultaneous. RNase H can probably proceed both in a polymerase-dependent (RNA cut into small fragments by the same RT performing DNA synthesis) and a polymerase-independent mode (cleavage of remaining RNA fragments by free RTs). Secondly, RT performs DNA-directed plus-strand DNA synthesis using the PPTs that have not been removed by RNase H as primers. PPTs and tRNA primers are then removed by RNase H. The 3' and 5' ssDNA PBS regions hybridize to form a circular dsDNA intermediate. Strand displacement synthesis by RT to the PBS and PPT ends produces a blunt ended, linear dsDNA copy of the viral genome that includes long terminal repeats (LTRs) at both ends (By similarity).</text>
</comment>
<comment type="function">
    <text evidence="1">Integrase catalyzes viral DNA integration into the host chromosome, by performing a series of DNA cutting and joining reactions. This enzyme activity takes place after virion entry into a cell and reverse transcription of the RNA genome in dsDNA. The first step in the integration process is 3' processing. This step requires a complex comprising the viral genome, matrix protein, Vpr and integrase. This complex is called the pre-integration complex (PIC). The integrase protein removes 2 nucleotides from each 3' end of the viral DNA, leaving recessed CA OH's at the 3' ends. In the second step, the PIC enters cell nucleus. This process is mediated through integrase and Vpr proteins, and allows the virus to infect a non dividing cell. This ability to enter the nucleus is specific of lentiviruses, other retroviruses cannot and rely on cell division to access cell chromosomes. In the third step, termed strand transfer, the integrase protein joins the previously processed 3' ends to the 5' ends of strands of target cellular DNA at the site of integration. The 5'-ends are produced by integrase-catalyzed staggered cuts, 5 bp apart. A Y-shaped, gapped, recombination intermediate results, with the 5'-ends of the viral DNA strands and the 3' ends of target DNA strands remaining unjoined, flanking a gap of 5 bp. The last step is viral DNA integration into host chromosome. This involves host DNA repair synthesis in which the 5 bp gaps between the unjoined strands are filled in and then ligated. Since this process occurs at both cuts flanking the SIV genome, a 5 bp duplication of host DNA is produced at the ends of SIV integration. Alternatively, Integrase may catalyze the excision of viral DNA just after strand transfer, this is termed disintegration (By similarity).</text>
</comment>
<comment type="catalytic activity">
    <reaction evidence="10">
        <text>Specific for a P1 residue that is hydrophobic, and P1' variable, but often Pro.</text>
        <dbReference type="EC" id="3.4.23.16"/>
    </reaction>
</comment>
<comment type="catalytic activity">
    <reaction>
        <text>Endohydrolysis of RNA in RNA/DNA hybrids. Three different cleavage modes: 1. sequence-specific internal cleavage of RNA. Human immunodeficiency virus type 1 and Moloney murine leukemia virus enzymes prefer to cleave the RNA strand one nucleotide away from the RNA-DNA junction. 2. RNA 5'-end directed cleavage 13-19 nucleotides from the RNA end. 3. DNA 3'-end directed cleavage 15-20 nucleotides away from the primer terminus.</text>
        <dbReference type="EC" id="3.1.26.13"/>
    </reaction>
</comment>
<comment type="catalytic activity">
    <reaction>
        <text>3'-end directed exonucleolytic cleavage of viral RNA-DNA hybrid.</text>
        <dbReference type="EC" id="3.1.13.2"/>
    </reaction>
</comment>
<comment type="catalytic activity">
    <reaction evidence="11">
        <text>DNA(n) + a 2'-deoxyribonucleoside 5'-triphosphate = DNA(n+1) + diphosphate</text>
        <dbReference type="Rhea" id="RHEA:22508"/>
        <dbReference type="Rhea" id="RHEA-COMP:17339"/>
        <dbReference type="Rhea" id="RHEA-COMP:17340"/>
        <dbReference type="ChEBI" id="CHEBI:33019"/>
        <dbReference type="ChEBI" id="CHEBI:61560"/>
        <dbReference type="ChEBI" id="CHEBI:173112"/>
        <dbReference type="EC" id="2.7.7.49"/>
    </reaction>
</comment>
<comment type="catalytic activity">
    <reaction evidence="11">
        <text>DNA(n) + a 2'-deoxyribonucleoside 5'-triphosphate = DNA(n+1) + diphosphate</text>
        <dbReference type="Rhea" id="RHEA:22508"/>
        <dbReference type="Rhea" id="RHEA-COMP:17339"/>
        <dbReference type="Rhea" id="RHEA-COMP:17340"/>
        <dbReference type="ChEBI" id="CHEBI:33019"/>
        <dbReference type="ChEBI" id="CHEBI:61560"/>
        <dbReference type="ChEBI" id="CHEBI:173112"/>
        <dbReference type="EC" id="2.7.7.7"/>
    </reaction>
</comment>
<comment type="cofactor">
    <cofactor evidence="1">
        <name>Mg(2+)</name>
        <dbReference type="ChEBI" id="CHEBI:18420"/>
    </cofactor>
    <text evidence="1">Binds 2 magnesium ions for reverse transcriptase polymerase activity.</text>
</comment>
<comment type="cofactor">
    <cofactor evidence="1">
        <name>Mg(2+)</name>
        <dbReference type="ChEBI" id="CHEBI:18420"/>
    </cofactor>
    <text evidence="1">Binds 2 magnesium ions for ribonuclease H (RNase H) activity. Substrate-binding is a precondition for magnesium binding.</text>
</comment>
<comment type="cofactor">
    <cofactor evidence="1">
        <name>Mg(2+)</name>
        <dbReference type="ChEBI" id="CHEBI:18420"/>
    </cofactor>
    <text evidence="1">Magnesium ions are required for integrase activity. Binds at least 1, maybe 2 magnesium ions.</text>
</comment>
<comment type="activity regulation">
    <text>The viral protease is inhibited by many synthetic protease inhibitors (PIs), such as amprenavir, atazanavir, indinavir, loprinavir, nelfinavir, ritonavir and saquinavir. RT can be inhibited either by nucleoside RT inhibitors (NRTIs) or by non nucleoside RT inhibitors (NNRTIs). NRTIs act as chain terminators, whereas NNRTIs inhibit DNA polymerization by binding a small hydrophobic pocket near the RT active site and inducing an allosteric change in this region. Classical NRTIs are abacavir, adefovir (PMEA), didanosine (ddI), lamivudine (3TC), stavudine (d4T), tenofovir (PMPA), zalcitabine (ddC), and zidovudine (AZT). Classical NNRTIs are atevirdine (BHAP U-87201E), delavirdine, efavirenz (DMP-266), emivirine (I-EBU), and nevirapine (BI-RG-587). The tritherapies used as a basic effective treatment of AIDS associate two NRTIs and one NNRTI. Use of protease inhibitors in tritherapy regimens permit more ambitious therapeutic strategies.</text>
</comment>
<comment type="subunit">
    <molecule>Matrix protein p17</molecule>
    <text evidence="5 6">Homotrimer. Interacts with gp41 (via C-terminus).</text>
</comment>
<comment type="subunit">
    <molecule>Protease</molecule>
    <text evidence="4 7">Homodimer. The active site consists of two apposed aspartic acid residues.</text>
</comment>
<comment type="subunit">
    <molecule>Reverse transcriptase/ribonuclease H</molecule>
    <text evidence="2">Heterodimer of p66 RT and p51 RT (RT p66/p51). Heterodimerization of RT is essential for DNA polymerase activity. Despite the sequence identities, p66 RT and p51 RT have distinct folding.</text>
</comment>
<comment type="subunit">
    <molecule>Integrase</molecule>
    <text evidence="3">Homotetramer; may further associate as a homohexadecamer (By similarity).</text>
</comment>
<comment type="subcellular location">
    <molecule>Matrix protein p17</molecule>
    <subcellularLocation>
        <location evidence="18">Virion</location>
    </subcellularLocation>
    <subcellularLocation>
        <location evidence="1">Host nucleus</location>
    </subcellularLocation>
    <subcellularLocation>
        <location evidence="1">Host cytoplasm</location>
    </subcellularLocation>
    <subcellularLocation>
        <location evidence="18">Host cell membrane</location>
        <topology evidence="18">Lipid-anchor</topology>
    </subcellularLocation>
    <text evidence="1">Following virus entry, the nuclear localization signal (NLS) of the matrix protein participates with Vpr to the nuclear localization of the viral genome. During virus production, the nuclear export activity of the matrix protein counteracts the NLS to maintain the Gag and Gag-Pol polyproteins in the cytoplasm, thereby directing unspliced RNA to the plasma membrane (By similarity).</text>
</comment>
<comment type="subcellular location">
    <molecule>Capsid protein p24</molecule>
    <subcellularLocation>
        <location evidence="18">Virion</location>
    </subcellularLocation>
</comment>
<comment type="subcellular location">
    <molecule>Nucleocapsid protein p7</molecule>
    <subcellularLocation>
        <location evidence="18">Virion</location>
    </subcellularLocation>
</comment>
<comment type="subcellular location">
    <molecule>Reverse transcriptase/ribonuclease H</molecule>
    <subcellularLocation>
        <location evidence="18">Virion</location>
    </subcellularLocation>
</comment>
<comment type="subcellular location">
    <molecule>Integrase</molecule>
    <subcellularLocation>
        <location evidence="18">Virion</location>
    </subcellularLocation>
    <subcellularLocation>
        <location evidence="18">Host nucleus</location>
    </subcellularLocation>
    <subcellularLocation>
        <location evidence="18">Host cytoplasm</location>
    </subcellularLocation>
    <text evidence="18">Nuclear at initial phase, cytoplasmic at assembly.</text>
</comment>
<comment type="alternative products">
    <event type="ribosomal frameshifting"/>
    <isoform>
        <id>P22382-1</id>
        <name>Gag-Pol polyprotein</name>
        <sequence type="displayed"/>
    </isoform>
    <isoform>
        <id>P22381-1</id>
        <name>Gag polyprotein</name>
        <sequence type="external"/>
    </isoform>
    <text>Translation results in the formation of the Gag polyprotein most of the time. Ribosomal frameshifting at the gag-pol genes boundary occurs at low frequency and produces the Gag-Pol polyprotein. This strategy of translation probably allows the virus to modulate the quantity of each viral protein. Maintenance of a correct Gag to Gag-Pol ratio is essential for RNA dimerization and viral infectivity.</text>
</comment>
<comment type="domain">
    <text evidence="1">The p66 RT is structured in five subdomains: finger, palm, thumb, connection and RNase H. Within the palm subdomain, the 'primer grip' region is thought to be involved in the positioning of the primer terminus for accommodating the incoming nucleotide. The RNase H domain stabilizes the association of RT with primer-template (By similarity).</text>
</comment>
<comment type="domain">
    <text evidence="1">The tryptophan repeat motif is involved in RT p66/p51 dimerization.</text>
</comment>
<comment type="PTM">
    <text evidence="11">Specific enzymatic cleavages by the viral protease yield mature proteins. The protease is released by autocatalytic cleavage. The polyprotein is cleaved during and after budding, this process is termed maturation. Proteolytic cleavage of p66 RT removes the RNase H domain to yield the p51 RT subunit.</text>
</comment>
<comment type="PTM">
    <text>Capsid protein p24 is phosphorylated.</text>
</comment>
<comment type="miscellaneous">
    <text>This is an African mandrill isolate.</text>
</comment>
<comment type="miscellaneous">
    <text>The reverse transcriptase is an error-prone enzyme that lacks a proof-reading function. High mutations rate is a direct consequence of this characteristic. RT also displays frequent template switching leading to high recombination rate. Recombination mostly occurs between homologous regions of the two copackaged RNA genomes. If these two RNA molecules derive from different viral strains, reverse transcription will give rise to highly recombinated proviral DNAs.</text>
</comment>
<comment type="miscellaneous">
    <molecule>Isoform Gag-Pol polyprotein</molecule>
    <text>Produced by -1 ribosomal frameshifting.</text>
</comment>
<protein>
    <recommendedName>
        <fullName>Gag-Pol polyprotein</fullName>
    </recommendedName>
    <alternativeName>
        <fullName>Pr160Gag-Pol</fullName>
    </alternativeName>
    <component>
        <recommendedName>
            <fullName>Matrix protein p17</fullName>
            <shortName>MA</shortName>
        </recommendedName>
    </component>
    <component>
        <recommendedName>
            <fullName>Capsid protein p24</fullName>
            <shortName>CA</shortName>
        </recommendedName>
    </component>
    <component>
        <recommendedName>
            <fullName>Nucleocapsid protein p7</fullName>
            <shortName>NC</shortName>
        </recommendedName>
    </component>
    <component>
        <recommendedName>
            <fullName>p6-pol</fullName>
            <shortName>p6*</shortName>
        </recommendedName>
    </component>
    <component>
        <recommendedName>
            <fullName>Protease</fullName>
            <ecNumber>3.4.23.16</ecNumber>
        </recommendedName>
        <alternativeName>
            <fullName>PR</fullName>
        </alternativeName>
        <alternativeName>
            <fullName>Retropepsin</fullName>
        </alternativeName>
    </component>
    <component>
        <recommendedName>
            <fullName>Reverse transcriptase/ribonuclease H</fullName>
            <ecNumber>2.7.7.49</ecNumber>
            <ecNumber>2.7.7.7</ecNumber>
            <ecNumber>3.1.26.13</ecNumber>
        </recommendedName>
        <alternativeName>
            <fullName>Exoribonuclease H</fullName>
            <ecNumber>3.1.13.2</ecNumber>
        </alternativeName>
        <alternativeName>
            <fullName>p66 RT</fullName>
        </alternativeName>
    </component>
    <component>
        <recommendedName>
            <fullName>p51 RT</fullName>
        </recommendedName>
    </component>
    <component>
        <recommendedName>
            <fullName>p15</fullName>
        </recommendedName>
    </component>
    <component>
        <recommendedName>
            <fullName>Integrase</fullName>
            <shortName>IN</shortName>
            <ecNumber evidence="4">2.7.7.-</ecNumber>
            <ecNumber evidence="4">3.1.-.-</ecNumber>
        </recommendedName>
    </component>
</protein>
<proteinExistence type="inferred from homology"/>
<organismHost>
    <name type="scientific">Cercopithecidae</name>
    <name type="common">Old World monkeys</name>
    <dbReference type="NCBI Taxonomy" id="9527"/>
</organismHost>
<gene>
    <name type="primary">gag-pol</name>
</gene>
<organism>
    <name type="scientific">Simian immunodeficiency virus (isolate GB1)</name>
    <name type="common">SIV-mnd</name>
    <name type="synonym">Simian immunodeficiency virus mandrill</name>
    <dbReference type="NCBI Taxonomy" id="11732"/>
    <lineage>
        <taxon>Viruses</taxon>
        <taxon>Riboviria</taxon>
        <taxon>Pararnavirae</taxon>
        <taxon>Artverviricota</taxon>
        <taxon>Revtraviricetes</taxon>
        <taxon>Ortervirales</taxon>
        <taxon>Retroviridae</taxon>
        <taxon>Orthoretrovirinae</taxon>
        <taxon>Lentivirus</taxon>
        <taxon>Simian immunodeficiency virus</taxon>
    </lineage>
</organism>
<dbReference type="EC" id="3.4.23.16"/>
<dbReference type="EC" id="2.7.7.49"/>
<dbReference type="EC" id="2.7.7.7"/>
<dbReference type="EC" id="3.1.26.13"/>
<dbReference type="EC" id="3.1.13.2"/>
<dbReference type="EC" id="2.7.7.-" evidence="4"/>
<dbReference type="EC" id="3.1.-.-" evidence="4"/>
<dbReference type="EMBL" id="M27470">
    <property type="protein sequence ID" value="AAB49569.1"/>
    <property type="molecule type" value="Genomic_RNA"/>
</dbReference>
<dbReference type="SMR" id="P22382"/>
<dbReference type="MEROPS" id="A02.003"/>
<dbReference type="PRO" id="PR:P22382"/>
<dbReference type="Proteomes" id="UP000259373">
    <property type="component" value="Segment"/>
</dbReference>
<dbReference type="GO" id="GO:0043657">
    <property type="term" value="C:host cell"/>
    <property type="evidence" value="ECO:0007669"/>
    <property type="project" value="GOC"/>
</dbReference>
<dbReference type="GO" id="GO:0030430">
    <property type="term" value="C:host cell cytoplasm"/>
    <property type="evidence" value="ECO:0007669"/>
    <property type="project" value="UniProtKB-SubCell"/>
</dbReference>
<dbReference type="GO" id="GO:0042025">
    <property type="term" value="C:host cell nucleus"/>
    <property type="evidence" value="ECO:0007669"/>
    <property type="project" value="UniProtKB-SubCell"/>
</dbReference>
<dbReference type="GO" id="GO:0020002">
    <property type="term" value="C:host cell plasma membrane"/>
    <property type="evidence" value="ECO:0007669"/>
    <property type="project" value="UniProtKB-SubCell"/>
</dbReference>
<dbReference type="GO" id="GO:0016020">
    <property type="term" value="C:membrane"/>
    <property type="evidence" value="ECO:0007669"/>
    <property type="project" value="UniProtKB-KW"/>
</dbReference>
<dbReference type="GO" id="GO:0019013">
    <property type="term" value="C:viral nucleocapsid"/>
    <property type="evidence" value="ECO:0007669"/>
    <property type="project" value="UniProtKB-KW"/>
</dbReference>
<dbReference type="GO" id="GO:0004190">
    <property type="term" value="F:aspartic-type endopeptidase activity"/>
    <property type="evidence" value="ECO:0007669"/>
    <property type="project" value="UniProtKB-KW"/>
</dbReference>
<dbReference type="GO" id="GO:0003677">
    <property type="term" value="F:DNA binding"/>
    <property type="evidence" value="ECO:0007669"/>
    <property type="project" value="UniProtKB-KW"/>
</dbReference>
<dbReference type="GO" id="GO:0003887">
    <property type="term" value="F:DNA-directed DNA polymerase activity"/>
    <property type="evidence" value="ECO:0007669"/>
    <property type="project" value="UniProtKB-KW"/>
</dbReference>
<dbReference type="GO" id="GO:0004533">
    <property type="term" value="F:exoribonuclease H activity"/>
    <property type="evidence" value="ECO:0007669"/>
    <property type="project" value="UniProtKB-EC"/>
</dbReference>
<dbReference type="GO" id="GO:0035613">
    <property type="term" value="F:RNA stem-loop binding"/>
    <property type="evidence" value="ECO:0007669"/>
    <property type="project" value="TreeGrafter"/>
</dbReference>
<dbReference type="GO" id="GO:0003964">
    <property type="term" value="F:RNA-directed DNA polymerase activity"/>
    <property type="evidence" value="ECO:0007669"/>
    <property type="project" value="UniProtKB-KW"/>
</dbReference>
<dbReference type="GO" id="GO:0004523">
    <property type="term" value="F:RNA-DNA hybrid ribonuclease activity"/>
    <property type="evidence" value="ECO:0007669"/>
    <property type="project" value="InterPro"/>
</dbReference>
<dbReference type="GO" id="GO:0005198">
    <property type="term" value="F:structural molecule activity"/>
    <property type="evidence" value="ECO:0007669"/>
    <property type="project" value="InterPro"/>
</dbReference>
<dbReference type="GO" id="GO:0008270">
    <property type="term" value="F:zinc ion binding"/>
    <property type="evidence" value="ECO:0007669"/>
    <property type="project" value="UniProtKB-KW"/>
</dbReference>
<dbReference type="GO" id="GO:0015074">
    <property type="term" value="P:DNA integration"/>
    <property type="evidence" value="ECO:0007669"/>
    <property type="project" value="UniProtKB-KW"/>
</dbReference>
<dbReference type="GO" id="GO:0006310">
    <property type="term" value="P:DNA recombination"/>
    <property type="evidence" value="ECO:0007669"/>
    <property type="project" value="UniProtKB-KW"/>
</dbReference>
<dbReference type="GO" id="GO:0075713">
    <property type="term" value="P:establishment of integrated proviral latency"/>
    <property type="evidence" value="ECO:0007669"/>
    <property type="project" value="UniProtKB-KW"/>
</dbReference>
<dbReference type="GO" id="GO:0006508">
    <property type="term" value="P:proteolysis"/>
    <property type="evidence" value="ECO:0007669"/>
    <property type="project" value="UniProtKB-KW"/>
</dbReference>
<dbReference type="GO" id="GO:0046718">
    <property type="term" value="P:symbiont entry into host cell"/>
    <property type="evidence" value="ECO:0007669"/>
    <property type="project" value="UniProtKB-KW"/>
</dbReference>
<dbReference type="GO" id="GO:0039657">
    <property type="term" value="P:symbiont-mediated suppression of host gene expression"/>
    <property type="evidence" value="ECO:0007669"/>
    <property type="project" value="UniProtKB-KW"/>
</dbReference>
<dbReference type="GO" id="GO:0044826">
    <property type="term" value="P:viral genome integration into host DNA"/>
    <property type="evidence" value="ECO:0007669"/>
    <property type="project" value="UniProtKB-KW"/>
</dbReference>
<dbReference type="GO" id="GO:0075732">
    <property type="term" value="P:viral penetration into host nucleus"/>
    <property type="evidence" value="ECO:0007669"/>
    <property type="project" value="UniProtKB-KW"/>
</dbReference>
<dbReference type="GO" id="GO:0075523">
    <property type="term" value="P:viral translational frameshifting"/>
    <property type="evidence" value="ECO:0007669"/>
    <property type="project" value="UniProtKB-KW"/>
</dbReference>
<dbReference type="CDD" id="cd05482">
    <property type="entry name" value="HIV_retropepsin_like"/>
    <property type="match status" value="1"/>
</dbReference>
<dbReference type="Gene3D" id="1.10.10.200">
    <property type="match status" value="1"/>
</dbReference>
<dbReference type="Gene3D" id="1.10.1200.30">
    <property type="match status" value="1"/>
</dbReference>
<dbReference type="Gene3D" id="3.30.70.270">
    <property type="match status" value="3"/>
</dbReference>
<dbReference type="Gene3D" id="2.40.70.10">
    <property type="entry name" value="Acid Proteases"/>
    <property type="match status" value="1"/>
</dbReference>
<dbReference type="Gene3D" id="3.10.10.10">
    <property type="entry name" value="HIV Type 1 Reverse Transcriptase, subunit A, domain 1"/>
    <property type="match status" value="1"/>
</dbReference>
<dbReference type="Gene3D" id="1.10.375.10">
    <property type="entry name" value="Human Immunodeficiency Virus Type 1 Capsid Protein"/>
    <property type="match status" value="1"/>
</dbReference>
<dbReference type="Gene3D" id="1.10.150.90">
    <property type="entry name" value="Immunodeficiency lentiviruses, gag gene matrix protein p17"/>
    <property type="match status" value="1"/>
</dbReference>
<dbReference type="Gene3D" id="2.30.30.10">
    <property type="entry name" value="Integrase, C-terminal domain superfamily, retroviral"/>
    <property type="match status" value="1"/>
</dbReference>
<dbReference type="Gene3D" id="3.30.420.10">
    <property type="entry name" value="Ribonuclease H-like superfamily/Ribonuclease H"/>
    <property type="match status" value="2"/>
</dbReference>
<dbReference type="Gene3D" id="1.20.5.760">
    <property type="entry name" value="Single helix bin"/>
    <property type="match status" value="1"/>
</dbReference>
<dbReference type="Gene3D" id="4.10.60.10">
    <property type="entry name" value="Zinc finger, CCHC-type"/>
    <property type="match status" value="1"/>
</dbReference>
<dbReference type="InterPro" id="IPR001969">
    <property type="entry name" value="Aspartic_peptidase_AS"/>
</dbReference>
<dbReference type="InterPro" id="IPR043502">
    <property type="entry name" value="DNA/RNA_pol_sf"/>
</dbReference>
<dbReference type="InterPro" id="IPR045345">
    <property type="entry name" value="Gag_p24_C"/>
</dbReference>
<dbReference type="InterPro" id="IPR017856">
    <property type="entry name" value="Integrase-like_N"/>
</dbReference>
<dbReference type="InterPro" id="IPR036862">
    <property type="entry name" value="Integrase_C_dom_sf_retrovir"/>
</dbReference>
<dbReference type="InterPro" id="IPR001037">
    <property type="entry name" value="Integrase_C_retrovir"/>
</dbReference>
<dbReference type="InterPro" id="IPR001584">
    <property type="entry name" value="Integrase_cat-core"/>
</dbReference>
<dbReference type="InterPro" id="IPR003308">
    <property type="entry name" value="Integrase_Zn-bd_dom_N"/>
</dbReference>
<dbReference type="InterPro" id="IPR000071">
    <property type="entry name" value="Lentvrl_matrix_N"/>
</dbReference>
<dbReference type="InterPro" id="IPR012344">
    <property type="entry name" value="Matrix_HIV/RSV_N"/>
</dbReference>
<dbReference type="InterPro" id="IPR001995">
    <property type="entry name" value="Peptidase_A2_cat"/>
</dbReference>
<dbReference type="InterPro" id="IPR021109">
    <property type="entry name" value="Peptidase_aspartic_dom_sf"/>
</dbReference>
<dbReference type="InterPro" id="IPR034170">
    <property type="entry name" value="Retropepsin-like_cat_dom"/>
</dbReference>
<dbReference type="InterPro" id="IPR018061">
    <property type="entry name" value="Retropepsins"/>
</dbReference>
<dbReference type="InterPro" id="IPR008916">
    <property type="entry name" value="Retrov_capsid_C"/>
</dbReference>
<dbReference type="InterPro" id="IPR008919">
    <property type="entry name" value="Retrov_capsid_N"/>
</dbReference>
<dbReference type="InterPro" id="IPR010999">
    <property type="entry name" value="Retrovr_matrix"/>
</dbReference>
<dbReference type="InterPro" id="IPR043128">
    <property type="entry name" value="Rev_trsase/Diguanyl_cyclase"/>
</dbReference>
<dbReference type="InterPro" id="IPR012337">
    <property type="entry name" value="RNaseH-like_sf"/>
</dbReference>
<dbReference type="InterPro" id="IPR002156">
    <property type="entry name" value="RNaseH_domain"/>
</dbReference>
<dbReference type="InterPro" id="IPR036397">
    <property type="entry name" value="RNaseH_sf"/>
</dbReference>
<dbReference type="InterPro" id="IPR000477">
    <property type="entry name" value="RT_dom"/>
</dbReference>
<dbReference type="InterPro" id="IPR010659">
    <property type="entry name" value="RVT_connect"/>
</dbReference>
<dbReference type="InterPro" id="IPR010661">
    <property type="entry name" value="RVT_thumb"/>
</dbReference>
<dbReference type="InterPro" id="IPR001878">
    <property type="entry name" value="Znf_CCHC"/>
</dbReference>
<dbReference type="InterPro" id="IPR036875">
    <property type="entry name" value="Znf_CCHC_sf"/>
</dbReference>
<dbReference type="PANTHER" id="PTHR41694">
    <property type="entry name" value="ENDOGENOUS RETROVIRUS GROUP K MEMBER POL PROTEIN"/>
    <property type="match status" value="1"/>
</dbReference>
<dbReference type="PANTHER" id="PTHR41694:SF3">
    <property type="entry name" value="RNA-DIRECTED DNA POLYMERASE-RELATED"/>
    <property type="match status" value="1"/>
</dbReference>
<dbReference type="Pfam" id="PF00540">
    <property type="entry name" value="Gag_p17"/>
    <property type="match status" value="1"/>
</dbReference>
<dbReference type="Pfam" id="PF19317">
    <property type="entry name" value="Gag_p24_C"/>
    <property type="match status" value="1"/>
</dbReference>
<dbReference type="Pfam" id="PF00552">
    <property type="entry name" value="IN_DBD_C"/>
    <property type="match status" value="1"/>
</dbReference>
<dbReference type="Pfam" id="PF02022">
    <property type="entry name" value="Integrase_Zn"/>
    <property type="match status" value="1"/>
</dbReference>
<dbReference type="Pfam" id="PF00075">
    <property type="entry name" value="RNase_H"/>
    <property type="match status" value="1"/>
</dbReference>
<dbReference type="Pfam" id="PF00665">
    <property type="entry name" value="rve"/>
    <property type="match status" value="1"/>
</dbReference>
<dbReference type="Pfam" id="PF00077">
    <property type="entry name" value="RVP"/>
    <property type="match status" value="1"/>
</dbReference>
<dbReference type="Pfam" id="PF00078">
    <property type="entry name" value="RVT_1"/>
    <property type="match status" value="1"/>
</dbReference>
<dbReference type="Pfam" id="PF06815">
    <property type="entry name" value="RVT_connect"/>
    <property type="match status" value="1"/>
</dbReference>
<dbReference type="Pfam" id="PF06817">
    <property type="entry name" value="RVT_thumb"/>
    <property type="match status" value="1"/>
</dbReference>
<dbReference type="Pfam" id="PF00098">
    <property type="entry name" value="zf-CCHC"/>
    <property type="match status" value="2"/>
</dbReference>
<dbReference type="PRINTS" id="PR00234">
    <property type="entry name" value="HIV1MATRIX"/>
</dbReference>
<dbReference type="SMART" id="SM00343">
    <property type="entry name" value="ZnF_C2HC"/>
    <property type="match status" value="2"/>
</dbReference>
<dbReference type="SUPFAM" id="SSF50630">
    <property type="entry name" value="Acid proteases"/>
    <property type="match status" value="1"/>
</dbReference>
<dbReference type="SUPFAM" id="SSF50122">
    <property type="entry name" value="DNA-binding domain of retroviral integrase"/>
    <property type="match status" value="1"/>
</dbReference>
<dbReference type="SUPFAM" id="SSF56672">
    <property type="entry name" value="DNA/RNA polymerases"/>
    <property type="match status" value="1"/>
</dbReference>
<dbReference type="SUPFAM" id="SSF46919">
    <property type="entry name" value="N-terminal Zn binding domain of HIV integrase"/>
    <property type="match status" value="1"/>
</dbReference>
<dbReference type="SUPFAM" id="SSF47836">
    <property type="entry name" value="Retroviral matrix proteins"/>
    <property type="match status" value="1"/>
</dbReference>
<dbReference type="SUPFAM" id="SSF47353">
    <property type="entry name" value="Retrovirus capsid dimerization domain-like"/>
    <property type="match status" value="1"/>
</dbReference>
<dbReference type="SUPFAM" id="SSF47943">
    <property type="entry name" value="Retrovirus capsid protein, N-terminal core domain"/>
    <property type="match status" value="1"/>
</dbReference>
<dbReference type="SUPFAM" id="SSF57756">
    <property type="entry name" value="Retrovirus zinc finger-like domains"/>
    <property type="match status" value="1"/>
</dbReference>
<dbReference type="SUPFAM" id="SSF53098">
    <property type="entry name" value="Ribonuclease H-like"/>
    <property type="match status" value="2"/>
</dbReference>
<dbReference type="PROSITE" id="PS50175">
    <property type="entry name" value="ASP_PROT_RETROV"/>
    <property type="match status" value="1"/>
</dbReference>
<dbReference type="PROSITE" id="PS00141">
    <property type="entry name" value="ASP_PROTEASE"/>
    <property type="match status" value="1"/>
</dbReference>
<dbReference type="PROSITE" id="PS50994">
    <property type="entry name" value="INTEGRASE"/>
    <property type="match status" value="1"/>
</dbReference>
<dbReference type="PROSITE" id="PS51027">
    <property type="entry name" value="INTEGRASE_DBD"/>
    <property type="match status" value="1"/>
</dbReference>
<dbReference type="PROSITE" id="PS50879">
    <property type="entry name" value="RNASE_H_1"/>
    <property type="match status" value="1"/>
</dbReference>
<dbReference type="PROSITE" id="PS50878">
    <property type="entry name" value="RT_POL"/>
    <property type="match status" value="1"/>
</dbReference>
<dbReference type="PROSITE" id="PS50158">
    <property type="entry name" value="ZF_CCHC"/>
    <property type="match status" value="1"/>
</dbReference>
<dbReference type="PROSITE" id="PS50876">
    <property type="entry name" value="ZF_INTEGRASE"/>
    <property type="match status" value="1"/>
</dbReference>
<evidence type="ECO:0000250" key="1"/>
<evidence type="ECO:0000250" key="2">
    <source>
        <dbReference type="UniProtKB" id="P03366"/>
    </source>
</evidence>
<evidence type="ECO:0000250" key="3">
    <source>
        <dbReference type="UniProtKB" id="P03367"/>
    </source>
</evidence>
<evidence type="ECO:0000250" key="4">
    <source>
        <dbReference type="UniProtKB" id="P04585"/>
    </source>
</evidence>
<evidence type="ECO:0000250" key="5">
    <source>
        <dbReference type="UniProtKB" id="P04591"/>
    </source>
</evidence>
<evidence type="ECO:0000250" key="6">
    <source>
        <dbReference type="UniProtKB" id="P12493"/>
    </source>
</evidence>
<evidence type="ECO:0000250" key="7">
    <source>
        <dbReference type="UniProtKB" id="P12497"/>
    </source>
</evidence>
<evidence type="ECO:0000255" key="8"/>
<evidence type="ECO:0000255" key="9">
    <source>
        <dbReference type="PROSITE-ProRule" id="PRU00047"/>
    </source>
</evidence>
<evidence type="ECO:0000255" key="10">
    <source>
        <dbReference type="PROSITE-ProRule" id="PRU00275"/>
    </source>
</evidence>
<evidence type="ECO:0000255" key="11">
    <source>
        <dbReference type="PROSITE-ProRule" id="PRU00405"/>
    </source>
</evidence>
<evidence type="ECO:0000255" key="12">
    <source>
        <dbReference type="PROSITE-ProRule" id="PRU00408"/>
    </source>
</evidence>
<evidence type="ECO:0000255" key="13">
    <source>
        <dbReference type="PROSITE-ProRule" id="PRU00450"/>
    </source>
</evidence>
<evidence type="ECO:0000255" key="14">
    <source>
        <dbReference type="PROSITE-ProRule" id="PRU00457"/>
    </source>
</evidence>
<evidence type="ECO:0000255" key="15">
    <source>
        <dbReference type="PROSITE-ProRule" id="PRU00506"/>
    </source>
</evidence>
<evidence type="ECO:0000255" key="16">
    <source>
        <dbReference type="PROSITE-ProRule" id="PRU10094"/>
    </source>
</evidence>
<evidence type="ECO:0000256" key="17">
    <source>
        <dbReference type="SAM" id="MobiDB-lite"/>
    </source>
</evidence>
<evidence type="ECO:0000305" key="18"/>
<name>POL_SIVGB</name>
<sequence>MGNGNSALLGTDLDKFEKIRLKRGGKKCYRLKHLCWCKGELDRFGLSDKLLETQQGCEKILSVCWPLYDQGSDNLKALVGTVCVVACIHAGIEIKSTQDALKKLKVITRKEEKQEDESKNFPVQRDAAGQYQYTPISPRIIQTWVKTVEEKKWKPEVIPLFSALTEGAISHDLNIMLNAVGDHQGAMQVLKDVINEQAAEWDLTHPQQQPAQPGGGLRTPSGSDIAGTTSTVEEQLAWMNMQQNAINVGTIYKSWIILGMNRLVKSHCPISITDVRQGPKEAFKDYVDRFYNVMRAEQASGEVKMWMQQHLLIENANPECKQILRSLGKGATLEEMLEACQGVGGPQHKARLMAEMMRTVVGQSQNFVQQRGPQRGPVRQPTGRKPICFNCNKEGHVARFFKAPRRKGCWNCGAMDHQKAQCPKPAQQQRVNFFRVWPLGSLQTGELSGTRGDSNSSTIRGETSAENSEHLSEIRERAQAEDEGGEERGGFSFPEYSLSRRPIEEVSVDGVTIRALLDTGADDTIFNERNIKLKGNWQPKIIGGIGGNLRVKQYDNVYVEIRGKGTFGTVLIGPTPIDIIGRNIMEKLGGKLILAQLSDKIPITKVKLKPGVDGPRIKQWPLSKEKIVGLQKICDRLEEEGKISRVDPGNNYNTPIFAIKKKDKNEWRKLIDFRELNKLTQDFHELQLGIPHPAGIKKCKRITVLDIGDAYFSIPLDPDYRPYTAFTVPSVNNQAPGKRYMYNVLPQGWKGSPCIFQGTVASLLEVFRKNHPTVQLYQYMDDLFVGSDYTAEEHEKAIVELRALLMTWNLETPEKKYQKEPPFHWMGYELHPDKWKIEKVQLPELAEQPTVNEIQKLVGKLNWAAQLYPGIKTKQLCKLIRGGLNITEKVTMTEEARLEYEQNKEILAEEQEGSYYDPNKELYVRFQKTTGGDISFQWKQGNKVLRAGKYGKQKTAHSNDLMKLAGATQKVGRESIVIWGFVPKMQIPTTREIWEDWWHEYWQCTWIPEVEFISTPMLEREWYSLSPEPLEGVETYYVDGAANRDSKMGKAGYITDRGFQRVEEYLNTTNQQTELHAVKLALEDSGSYVNIVTDSQYVVGILASRPTETDHPIVKEIIELMKGKEKIYLSWLPAHKGIGGNEQIDKLVSSGIRKVLFLQNIEPAQEEHEKYHSNEAQLREKFHLPALVAKQIVQSCSKCCHHGEPIKGQTDASLGVWQIDCTHLENQIIIVAVHVASGFMKAEVITAETGKKTAEFLLKLAAQWPISKLHTDNGPNFTSQEVETMCWWLGIEHTFGIPYNPQSQGVVENKNKYLKELIEKIREDCKELKTAVAMATFIHNFKQRGGLGGMTAGERIVNMINTELEYQYQQNQISKNLNFKVYFREGRDQLWKGPGILLWKGEGAVVLKYQEEIKIVPRRKCKIIKDYGESGKNSQVNLESV</sequence>
<keyword id="KW-0064">Aspartyl protease</keyword>
<keyword id="KW-0167">Capsid protein</keyword>
<keyword id="KW-0229">DNA integration</keyword>
<keyword id="KW-0233">DNA recombination</keyword>
<keyword id="KW-0238">DNA-binding</keyword>
<keyword id="KW-0239">DNA-directed DNA polymerase</keyword>
<keyword id="KW-0255">Endonuclease</keyword>
<keyword id="KW-1262">Eukaryotic host gene expression shutoff by virus</keyword>
<keyword id="KW-1193">Eukaryotic host translation shutoff by virus</keyword>
<keyword id="KW-1032">Host cell membrane</keyword>
<keyword id="KW-1035">Host cytoplasm</keyword>
<keyword id="KW-1190">Host gene expression shutoff by virus</keyword>
<keyword id="KW-1043">Host membrane</keyword>
<keyword id="KW-1048">Host nucleus</keyword>
<keyword id="KW-0945">Host-virus interaction</keyword>
<keyword id="KW-0378">Hydrolase</keyword>
<keyword id="KW-0449">Lipoprotein</keyword>
<keyword id="KW-0460">Magnesium</keyword>
<keyword id="KW-0472">Membrane</keyword>
<keyword id="KW-0479">Metal-binding</keyword>
<keyword id="KW-0511">Multifunctional enzyme</keyword>
<keyword id="KW-0519">Myristate</keyword>
<keyword id="KW-0540">Nuclease</keyword>
<keyword id="KW-0548">Nucleotidyltransferase</keyword>
<keyword id="KW-0597">Phosphoprotein</keyword>
<keyword id="KW-0645">Protease</keyword>
<keyword id="KW-0677">Repeat</keyword>
<keyword id="KW-0688">Ribosomal frameshifting</keyword>
<keyword id="KW-0694">RNA-binding</keyword>
<keyword id="KW-0695">RNA-directed DNA polymerase</keyword>
<keyword id="KW-0808">Transferase</keyword>
<keyword id="KW-1179">Viral genome integration</keyword>
<keyword id="KW-0543">Viral nucleoprotein</keyword>
<keyword id="KW-1163">Viral penetration into host nucleus</keyword>
<keyword id="KW-1188">Viral release from host cell</keyword>
<keyword id="KW-0946">Virion</keyword>
<keyword id="KW-0917">Virion maturation</keyword>
<keyword id="KW-1160">Virus entry into host cell</keyword>
<keyword id="KW-0862">Zinc</keyword>
<keyword id="KW-0863">Zinc-finger</keyword>
<reference key="1">
    <citation type="journal article" date="1989" name="Nature">
        <title>Sequence of a novel simian immunodeficiency virus from a wild-caught African mandrill.</title>
        <authorList>
            <person name="Tsujimoto H."/>
            <person name="Hasegawa A."/>
            <person name="Maki N."/>
            <person name="Fukasawa M."/>
            <person name="Miura T."/>
            <person name="Speidel S."/>
            <person name="Cooper R.W."/>
            <person name="Moriyama E.N."/>
            <person name="Gojobori T."/>
            <person name="Hayami M."/>
        </authorList>
    </citation>
    <scope>NUCLEOTIDE SEQUENCE [GENOMIC RNA]</scope>
</reference>